<dbReference type="EMBL" id="M63649">
    <property type="protein sequence ID" value="AAA40514.1"/>
    <property type="molecule type" value="Genomic_DNA"/>
</dbReference>
<dbReference type="EMBL" id="M63650">
    <property type="protein sequence ID" value="AAA40515.1"/>
    <property type="molecule type" value="mRNA"/>
</dbReference>
<dbReference type="EMBL" id="BC033434">
    <property type="protein sequence ID" value="AAH33434.1"/>
    <property type="molecule type" value="mRNA"/>
</dbReference>
<dbReference type="EMBL" id="BC083139">
    <property type="protein sequence ID" value="AAH83139.1"/>
    <property type="molecule type" value="mRNA"/>
</dbReference>
<dbReference type="CCDS" id="CCDS25879.1"/>
<dbReference type="PIR" id="I53066">
    <property type="entry name" value="I53066"/>
</dbReference>
<dbReference type="RefSeq" id="NP_035788.1">
    <property type="nucleotide sequence ID" value="NM_011658.2"/>
</dbReference>
<dbReference type="SMR" id="P26687"/>
<dbReference type="BioGRID" id="204385">
    <property type="interactions" value="110"/>
</dbReference>
<dbReference type="DIP" id="DIP-61633N"/>
<dbReference type="FunCoup" id="P26687">
    <property type="interactions" value="1046"/>
</dbReference>
<dbReference type="IntAct" id="P26687">
    <property type="interactions" value="6"/>
</dbReference>
<dbReference type="STRING" id="10090.ENSMUSP00000040089"/>
<dbReference type="iPTMnet" id="P26687"/>
<dbReference type="PhosphoSitePlus" id="P26687"/>
<dbReference type="jPOST" id="P26687"/>
<dbReference type="PaxDb" id="10090-ENSMUSP00000040089"/>
<dbReference type="ProteomicsDB" id="298339"/>
<dbReference type="Antibodypedia" id="11900">
    <property type="antibodies" value="653 antibodies from 40 providers"/>
</dbReference>
<dbReference type="DNASU" id="22160"/>
<dbReference type="Ensembl" id="ENSMUST00000049089.7">
    <property type="protein sequence ID" value="ENSMUSP00000040089.6"/>
    <property type="gene ID" value="ENSMUSG00000035799.7"/>
</dbReference>
<dbReference type="GeneID" id="22160"/>
<dbReference type="KEGG" id="mmu:22160"/>
<dbReference type="UCSC" id="uc007niw.1">
    <property type="organism name" value="mouse"/>
</dbReference>
<dbReference type="AGR" id="MGI:98872"/>
<dbReference type="CTD" id="7291"/>
<dbReference type="MGI" id="MGI:98872">
    <property type="gene designation" value="Twist1"/>
</dbReference>
<dbReference type="VEuPathDB" id="HostDB:ENSMUSG00000035799"/>
<dbReference type="eggNOG" id="KOG4447">
    <property type="taxonomic scope" value="Eukaryota"/>
</dbReference>
<dbReference type="GeneTree" id="ENSGT00940000162831"/>
<dbReference type="HOGENOM" id="CLU_112073_0_0_1"/>
<dbReference type="InParanoid" id="P26687"/>
<dbReference type="OMA" id="XSSSAGI"/>
<dbReference type="OrthoDB" id="8583783at2759"/>
<dbReference type="PhylomeDB" id="P26687"/>
<dbReference type="TreeFam" id="TF315153"/>
<dbReference type="BioGRID-ORCS" id="22160">
    <property type="hits" value="4 hits in 116 CRISPR screens"/>
</dbReference>
<dbReference type="ChiTaRS" id="Twist1">
    <property type="organism name" value="mouse"/>
</dbReference>
<dbReference type="PRO" id="PR:P26687"/>
<dbReference type="Proteomes" id="UP000000589">
    <property type="component" value="Chromosome 12"/>
</dbReference>
<dbReference type="RNAct" id="P26687">
    <property type="molecule type" value="protein"/>
</dbReference>
<dbReference type="Bgee" id="ENSMUSG00000035799">
    <property type="expression patterns" value="Expressed in pharyngeal arch 1 and 227 other cell types or tissues"/>
</dbReference>
<dbReference type="GO" id="GO:0005654">
    <property type="term" value="C:nucleoplasm"/>
    <property type="evidence" value="ECO:0000304"/>
    <property type="project" value="Reactome"/>
</dbReference>
<dbReference type="GO" id="GO:0005634">
    <property type="term" value="C:nucleus"/>
    <property type="evidence" value="ECO:0000314"/>
    <property type="project" value="MGI"/>
</dbReference>
<dbReference type="GO" id="GO:0043425">
    <property type="term" value="F:bHLH transcription factor binding"/>
    <property type="evidence" value="ECO:0000353"/>
    <property type="project" value="UniProtKB"/>
</dbReference>
<dbReference type="GO" id="GO:0001228">
    <property type="term" value="F:DNA-binding transcription activator activity, RNA polymerase II-specific"/>
    <property type="evidence" value="ECO:0000304"/>
    <property type="project" value="BHF-UCL"/>
</dbReference>
<dbReference type="GO" id="GO:0003700">
    <property type="term" value="F:DNA-binding transcription factor activity"/>
    <property type="evidence" value="ECO:0000314"/>
    <property type="project" value="UniProtKB"/>
</dbReference>
<dbReference type="GO" id="GO:0001217">
    <property type="term" value="F:DNA-binding transcription repressor activity"/>
    <property type="evidence" value="ECO:0007669"/>
    <property type="project" value="Ensembl"/>
</dbReference>
<dbReference type="GO" id="GO:0070888">
    <property type="term" value="F:E-box binding"/>
    <property type="evidence" value="ECO:0000314"/>
    <property type="project" value="UniProtKB"/>
</dbReference>
<dbReference type="GO" id="GO:0042826">
    <property type="term" value="F:histone deacetylase binding"/>
    <property type="evidence" value="ECO:0000314"/>
    <property type="project" value="BHF-UCL"/>
</dbReference>
<dbReference type="GO" id="GO:0042802">
    <property type="term" value="F:identical protein binding"/>
    <property type="evidence" value="ECO:0000353"/>
    <property type="project" value="MGI"/>
</dbReference>
<dbReference type="GO" id="GO:0019904">
    <property type="term" value="F:protein domain specific binding"/>
    <property type="evidence" value="ECO:0000353"/>
    <property type="project" value="MGI"/>
</dbReference>
<dbReference type="GO" id="GO:0042803">
    <property type="term" value="F:protein homodimerization activity"/>
    <property type="evidence" value="ECO:0000314"/>
    <property type="project" value="UniProtKB"/>
</dbReference>
<dbReference type="GO" id="GO:0001221">
    <property type="term" value="F:transcription coregulator binding"/>
    <property type="evidence" value="ECO:0000353"/>
    <property type="project" value="BHF-UCL"/>
</dbReference>
<dbReference type="GO" id="GO:0003180">
    <property type="term" value="P:aortic valve morphogenesis"/>
    <property type="evidence" value="ECO:0000315"/>
    <property type="project" value="BHF-UCL"/>
</dbReference>
<dbReference type="GO" id="GO:0061309">
    <property type="term" value="P:cardiac neural crest cell development involved in outflow tract morphogenesis"/>
    <property type="evidence" value="ECO:0000315"/>
    <property type="project" value="MGI"/>
</dbReference>
<dbReference type="GO" id="GO:0003253">
    <property type="term" value="P:cardiac neural crest cell migration involved in outflow tract morphogenesis"/>
    <property type="evidence" value="ECO:0000315"/>
    <property type="project" value="MGI"/>
</dbReference>
<dbReference type="GO" id="GO:2000793">
    <property type="term" value="P:cell proliferation involved in heart valve development"/>
    <property type="evidence" value="ECO:0000315"/>
    <property type="project" value="BHF-UCL"/>
</dbReference>
<dbReference type="GO" id="GO:0071456">
    <property type="term" value="P:cellular response to hypoxia"/>
    <property type="evidence" value="ECO:0000315"/>
    <property type="project" value="BHF-UCL"/>
</dbReference>
<dbReference type="GO" id="GO:0060363">
    <property type="term" value="P:cranial suture morphogenesis"/>
    <property type="evidence" value="ECO:0000315"/>
    <property type="project" value="UniProtKB"/>
</dbReference>
<dbReference type="GO" id="GO:0060900">
    <property type="term" value="P:embryonic camera-type eye formation"/>
    <property type="evidence" value="ECO:0007669"/>
    <property type="project" value="Ensembl"/>
</dbReference>
<dbReference type="GO" id="GO:0048701">
    <property type="term" value="P:embryonic cranial skeleton morphogenesis"/>
    <property type="evidence" value="ECO:0000315"/>
    <property type="project" value="BHF-UCL"/>
</dbReference>
<dbReference type="GO" id="GO:0042733">
    <property type="term" value="P:embryonic digit morphogenesis"/>
    <property type="evidence" value="ECO:0000315"/>
    <property type="project" value="MGI"/>
</dbReference>
<dbReference type="GO" id="GO:0035115">
    <property type="term" value="P:embryonic forelimb morphogenesis"/>
    <property type="evidence" value="ECO:0000315"/>
    <property type="project" value="MGI"/>
</dbReference>
<dbReference type="GO" id="GO:0035116">
    <property type="term" value="P:embryonic hindlimb morphogenesis"/>
    <property type="evidence" value="ECO:0000315"/>
    <property type="project" value="BHF-UCL"/>
</dbReference>
<dbReference type="GO" id="GO:0030326">
    <property type="term" value="P:embryonic limb morphogenesis"/>
    <property type="evidence" value="ECO:0000315"/>
    <property type="project" value="MGI"/>
</dbReference>
<dbReference type="GO" id="GO:0048704">
    <property type="term" value="P:embryonic skeletal system morphogenesis"/>
    <property type="evidence" value="ECO:0000315"/>
    <property type="project" value="MGI"/>
</dbReference>
<dbReference type="GO" id="GO:0003203">
    <property type="term" value="P:endocardial cushion morphogenesis"/>
    <property type="evidence" value="ECO:0000315"/>
    <property type="project" value="MGI"/>
</dbReference>
<dbReference type="GO" id="GO:0097009">
    <property type="term" value="P:energy homeostasis"/>
    <property type="evidence" value="ECO:0000314"/>
    <property type="project" value="BHF-UCL"/>
</dbReference>
<dbReference type="GO" id="GO:0061029">
    <property type="term" value="P:eyelid development in camera-type eye"/>
    <property type="evidence" value="ECO:0007669"/>
    <property type="project" value="Ensembl"/>
</dbReference>
<dbReference type="GO" id="GO:0035137">
    <property type="term" value="P:hindlimb morphogenesis"/>
    <property type="evidence" value="ECO:0000315"/>
    <property type="project" value="MGI"/>
</dbReference>
<dbReference type="GO" id="GO:0001701">
    <property type="term" value="P:in utero embryonic development"/>
    <property type="evidence" value="ECO:0000315"/>
    <property type="project" value="MGI"/>
</dbReference>
<dbReference type="GO" id="GO:0003183">
    <property type="term" value="P:mitral valve morphogenesis"/>
    <property type="evidence" value="ECO:0000315"/>
    <property type="project" value="BHF-UCL"/>
</dbReference>
<dbReference type="GO" id="GO:0007517">
    <property type="term" value="P:muscle organ development"/>
    <property type="evidence" value="ECO:0007669"/>
    <property type="project" value="UniProtKB-KW"/>
</dbReference>
<dbReference type="GO" id="GO:0043066">
    <property type="term" value="P:negative regulation of apoptotic process"/>
    <property type="evidence" value="ECO:0000315"/>
    <property type="project" value="MGI"/>
</dbReference>
<dbReference type="GO" id="GO:0045596">
    <property type="term" value="P:negative regulation of cell differentiation"/>
    <property type="evidence" value="ECO:0000314"/>
    <property type="project" value="UniProtKB"/>
</dbReference>
<dbReference type="GO" id="GO:2000773">
    <property type="term" value="P:negative regulation of cellular senescence"/>
    <property type="evidence" value="ECO:0007669"/>
    <property type="project" value="Ensembl"/>
</dbReference>
<dbReference type="GO" id="GO:0043518">
    <property type="term" value="P:negative regulation of DNA damage response, signal transduction by p53 class mediator"/>
    <property type="evidence" value="ECO:0007669"/>
    <property type="project" value="Ensembl"/>
</dbReference>
<dbReference type="GO" id="GO:0045892">
    <property type="term" value="P:negative regulation of DNA-templated transcription"/>
    <property type="evidence" value="ECO:0000314"/>
    <property type="project" value="UniProtKB"/>
</dbReference>
<dbReference type="GO" id="GO:2000780">
    <property type="term" value="P:negative regulation of double-strand break repair"/>
    <property type="evidence" value="ECO:0007669"/>
    <property type="project" value="Ensembl"/>
</dbReference>
<dbReference type="GO" id="GO:0010936">
    <property type="term" value="P:negative regulation of macrophage cytokine production"/>
    <property type="evidence" value="ECO:0000316"/>
    <property type="project" value="MGI"/>
</dbReference>
<dbReference type="GO" id="GO:1902894">
    <property type="term" value="P:negative regulation of miRNA transcription"/>
    <property type="evidence" value="ECO:0007669"/>
    <property type="project" value="Ensembl"/>
</dbReference>
<dbReference type="GO" id="GO:0045668">
    <property type="term" value="P:negative regulation of osteoblast differentiation"/>
    <property type="evidence" value="ECO:0000314"/>
    <property type="project" value="MGI"/>
</dbReference>
<dbReference type="GO" id="GO:0035359">
    <property type="term" value="P:negative regulation of peroxisome proliferator activated receptor signaling pathway"/>
    <property type="evidence" value="ECO:0000314"/>
    <property type="project" value="BHF-UCL"/>
</dbReference>
<dbReference type="GO" id="GO:0051898">
    <property type="term" value="P:negative regulation of phosphatidylinositol 3-kinase/protein kinase B signal transduction"/>
    <property type="evidence" value="ECO:0007669"/>
    <property type="project" value="Ensembl"/>
</dbReference>
<dbReference type="GO" id="GO:0048642">
    <property type="term" value="P:negative regulation of skeletal muscle tissue development"/>
    <property type="evidence" value="ECO:0000314"/>
    <property type="project" value="MGI"/>
</dbReference>
<dbReference type="GO" id="GO:0045843">
    <property type="term" value="P:negative regulation of striated muscle tissue development"/>
    <property type="evidence" value="ECO:0000314"/>
    <property type="project" value="UniProtKB"/>
</dbReference>
<dbReference type="GO" id="GO:0000122">
    <property type="term" value="P:negative regulation of transcription by RNA polymerase II"/>
    <property type="evidence" value="ECO:0000314"/>
    <property type="project" value="UniProtKB"/>
</dbReference>
<dbReference type="GO" id="GO:0032720">
    <property type="term" value="P:negative regulation of tumor necrosis factor production"/>
    <property type="evidence" value="ECO:0000316"/>
    <property type="project" value="MGI"/>
</dbReference>
<dbReference type="GO" id="GO:0001843">
    <property type="term" value="P:neural tube closure"/>
    <property type="evidence" value="ECO:0000315"/>
    <property type="project" value="MGI"/>
</dbReference>
<dbReference type="GO" id="GO:0001764">
    <property type="term" value="P:neuron migration"/>
    <property type="evidence" value="ECO:0000315"/>
    <property type="project" value="MGI"/>
</dbReference>
<dbReference type="GO" id="GO:0001503">
    <property type="term" value="P:ossification"/>
    <property type="evidence" value="ECO:0000315"/>
    <property type="project" value="MGI"/>
</dbReference>
<dbReference type="GO" id="GO:0001649">
    <property type="term" value="P:osteoblast differentiation"/>
    <property type="evidence" value="ECO:0000315"/>
    <property type="project" value="MGI"/>
</dbReference>
<dbReference type="GO" id="GO:0030335">
    <property type="term" value="P:positive regulation of cell migration"/>
    <property type="evidence" value="ECO:0007669"/>
    <property type="project" value="Ensembl"/>
</dbReference>
<dbReference type="GO" id="GO:2000147">
    <property type="term" value="P:positive regulation of cell motility"/>
    <property type="evidence" value="ECO:0000315"/>
    <property type="project" value="BHF-UCL"/>
</dbReference>
<dbReference type="GO" id="GO:2000144">
    <property type="term" value="P:positive regulation of DNA-templated transcription initiation"/>
    <property type="evidence" value="ECO:0007669"/>
    <property type="project" value="Ensembl"/>
</dbReference>
<dbReference type="GO" id="GO:2000802">
    <property type="term" value="P:positive regulation of endocardial cushion to mesenchymal transition involved in heart valve formation"/>
    <property type="evidence" value="ECO:0000314"/>
    <property type="project" value="BHF-UCL"/>
</dbReference>
<dbReference type="GO" id="GO:0010718">
    <property type="term" value="P:positive regulation of epithelial to mesenchymal transition"/>
    <property type="evidence" value="ECO:0000315"/>
    <property type="project" value="BHF-UCL"/>
</dbReference>
<dbReference type="GO" id="GO:0032000">
    <property type="term" value="P:positive regulation of fatty acid beta-oxidation"/>
    <property type="evidence" value="ECO:0007669"/>
    <property type="project" value="Ensembl"/>
</dbReference>
<dbReference type="GO" id="GO:0032755">
    <property type="term" value="P:positive regulation of interleukin-6 production"/>
    <property type="evidence" value="ECO:0007669"/>
    <property type="project" value="Ensembl"/>
</dbReference>
<dbReference type="GO" id="GO:0071639">
    <property type="term" value="P:positive regulation of monocyte chemotactic protein-1 production"/>
    <property type="evidence" value="ECO:0007669"/>
    <property type="project" value="Ensembl"/>
</dbReference>
<dbReference type="GO" id="GO:0045944">
    <property type="term" value="P:positive regulation of transcription by RNA polymerase II"/>
    <property type="evidence" value="ECO:0000314"/>
    <property type="project" value="UniProtKB"/>
</dbReference>
<dbReference type="GO" id="GO:0032760">
    <property type="term" value="P:positive regulation of tumor necrosis factor production"/>
    <property type="evidence" value="ECO:0007669"/>
    <property type="project" value="Ensembl"/>
</dbReference>
<dbReference type="GO" id="GO:0030500">
    <property type="term" value="P:regulation of bone mineralization"/>
    <property type="evidence" value="ECO:0007669"/>
    <property type="project" value="Ensembl"/>
</dbReference>
<dbReference type="GO" id="GO:0048511">
    <property type="term" value="P:rhythmic process"/>
    <property type="evidence" value="ECO:0007669"/>
    <property type="project" value="UniProtKB-KW"/>
</dbReference>
<dbReference type="GO" id="GO:0048863">
    <property type="term" value="P:stem cell differentiation"/>
    <property type="evidence" value="ECO:0000315"/>
    <property type="project" value="MGI"/>
</dbReference>
<dbReference type="CDD" id="cd11412">
    <property type="entry name" value="bHLH_TS_TWIST1"/>
    <property type="match status" value="1"/>
</dbReference>
<dbReference type="FunFam" id="4.10.280.10:FF:000030">
    <property type="entry name" value="Twist transcription factor"/>
    <property type="match status" value="1"/>
</dbReference>
<dbReference type="Gene3D" id="4.10.280.10">
    <property type="entry name" value="Helix-loop-helix DNA-binding domain"/>
    <property type="match status" value="1"/>
</dbReference>
<dbReference type="InterPro" id="IPR011598">
    <property type="entry name" value="bHLH_dom"/>
</dbReference>
<dbReference type="InterPro" id="IPR050283">
    <property type="entry name" value="E-box_TF_Regulators"/>
</dbReference>
<dbReference type="InterPro" id="IPR036638">
    <property type="entry name" value="HLH_DNA-bd_sf"/>
</dbReference>
<dbReference type="InterPro" id="IPR047093">
    <property type="entry name" value="TWIST1_bHLH"/>
</dbReference>
<dbReference type="PANTHER" id="PTHR23349">
    <property type="entry name" value="BASIC HELIX-LOOP-HELIX TRANSCRIPTION FACTOR, TWIST"/>
    <property type="match status" value="1"/>
</dbReference>
<dbReference type="PANTHER" id="PTHR23349:SF64">
    <property type="entry name" value="TWIST-RELATED PROTEIN 1"/>
    <property type="match status" value="1"/>
</dbReference>
<dbReference type="Pfam" id="PF00010">
    <property type="entry name" value="HLH"/>
    <property type="match status" value="1"/>
</dbReference>
<dbReference type="SMART" id="SM00353">
    <property type="entry name" value="HLH"/>
    <property type="match status" value="1"/>
</dbReference>
<dbReference type="SUPFAM" id="SSF47459">
    <property type="entry name" value="HLH, helix-loop-helix DNA-binding domain"/>
    <property type="match status" value="1"/>
</dbReference>
<dbReference type="PROSITE" id="PS50888">
    <property type="entry name" value="BHLH"/>
    <property type="match status" value="1"/>
</dbReference>
<accession>P26687</accession>
<name>TWST1_MOUSE</name>
<evidence type="ECO:0000255" key="1">
    <source>
        <dbReference type="PROSITE-ProRule" id="PRU00981"/>
    </source>
</evidence>
<evidence type="ECO:0000256" key="2">
    <source>
        <dbReference type="SAM" id="MobiDB-lite"/>
    </source>
</evidence>
<evidence type="ECO:0000269" key="3">
    <source>
    </source>
</evidence>
<evidence type="ECO:0000269" key="4">
    <source>
    </source>
</evidence>
<evidence type="ECO:0000269" key="5">
    <source>
    </source>
</evidence>
<evidence type="ECO:0000269" key="6">
    <source>
    </source>
</evidence>
<evidence type="ECO:0000269" key="7">
    <source>
    </source>
</evidence>
<evidence type="ECO:0000269" key="8">
    <source>
    </source>
</evidence>
<evidence type="ECO:0000269" key="9">
    <source>
    </source>
</evidence>
<evidence type="ECO:0000305" key="10"/>
<keyword id="KW-0010">Activator</keyword>
<keyword id="KW-0090">Biological rhythms</keyword>
<keyword id="KW-0217">Developmental protein</keyword>
<keyword id="KW-0221">Differentiation</keyword>
<keyword id="KW-0238">DNA-binding</keyword>
<keyword id="KW-0517">Myogenesis</keyword>
<keyword id="KW-0539">Nucleus</keyword>
<keyword id="KW-1185">Reference proteome</keyword>
<keyword id="KW-0678">Repressor</keyword>
<keyword id="KW-0804">Transcription</keyword>
<keyword id="KW-0805">Transcription regulation</keyword>
<comment type="function">
    <text evidence="3 4 5 6 9">Acts as a transcriptional regulator. Inhibits myogenesis by sequestrating E proteins, inhibiting trans-activation by MEF2, and inhibiting DNA-binding by MYOD1 through physical interaction. This interaction probably involves the basic domains of both proteins. Also represses expression of pro-inflammatory cytokines such as TNFA and IL1B. Regulates cranial suture patterning and fusion. Activates transcription as a heterodimer with E proteins. Regulates gene expression differentially, depending on dimer composition. Homodimers induce expression of FGFR2 and POSTN while heterodimers repress FGFR2 and POSTN expression and induce THBS1 expression. Heterodimerization is also required for osteoblast differentiation. Represses the activity of the circadian transcriptional activator: NPAS2-BMAL1 heterodimer.</text>
</comment>
<comment type="subunit">
    <text evidence="5 6 8">Efficient DNA binding requires dimerization with another bHLH protein (PubMed:16502419, PubMed:17893140). Homodimer or heterodimer with E proteins such as TCF3 (PubMed:16502419, PubMed:17893140, PubMed:23395635). ID1 binds preferentially to TCF3 but does not interact efficiently with TWIST1 so ID1 levels control the amount of TCF3 available to dimerize with TWIST1 and thus determine the type of dimer formed (PubMed:16502419, PubMed:17893140).</text>
</comment>
<comment type="interaction">
    <interactant intactId="EBI-6123119">
        <id>P26687</id>
    </interactant>
    <interactant intactId="EBI-1044298">
        <id>Q9UN86</id>
        <label>G3BP2</label>
    </interactant>
    <organismsDiffer>true</organismsDiffer>
    <experiments>2</experiments>
</comment>
<comment type="interaction">
    <interactant intactId="EBI-6123119">
        <id>P26687</id>
    </interactant>
    <interactant intactId="EBI-366083">
        <id>P04637</id>
        <label>TP53</label>
    </interactant>
    <organismsDiffer>true</organismsDiffer>
    <experiments>4</experiments>
</comment>
<comment type="subcellular location">
    <subcellularLocation>
        <location>Nucleus</location>
    </subcellularLocation>
</comment>
<comment type="tissue specificity">
    <text evidence="7">Subset of mesodermal cells.</text>
</comment>
<comment type="induction">
    <text evidence="3">By TNF-alpha.</text>
</comment>
<gene>
    <name type="primary">Twist1</name>
    <name type="synonym">Twist</name>
</gene>
<proteinExistence type="evidence at protein level"/>
<protein>
    <recommendedName>
        <fullName>Twist-related protein 1</fullName>
    </recommendedName>
    <alternativeName>
        <fullName>M-twist</fullName>
    </alternativeName>
</protein>
<feature type="chain" id="PRO_0000127488" description="Twist-related protein 1">
    <location>
        <begin position="1"/>
        <end position="206"/>
    </location>
</feature>
<feature type="domain" description="bHLH" evidence="1">
    <location>
        <begin position="112"/>
        <end position="163"/>
    </location>
</feature>
<feature type="region of interest" description="Disordered" evidence="2">
    <location>
        <begin position="1"/>
        <end position="109"/>
    </location>
</feature>
<feature type="region of interest" description="Sufficient for transactivation activity">
    <location>
        <begin position="165"/>
        <end position="195"/>
    </location>
</feature>
<feature type="compositionally biased region" description="Low complexity" evidence="2">
    <location>
        <begin position="1"/>
        <end position="18"/>
    </location>
</feature>
<feature type="compositionally biased region" description="Basic residues" evidence="2">
    <location>
        <begin position="34"/>
        <end position="43"/>
    </location>
</feature>
<feature type="compositionally biased region" description="Gly residues" evidence="2">
    <location>
        <begin position="48"/>
        <end position="65"/>
    </location>
</feature>
<feature type="compositionally biased region" description="Gly residues" evidence="2">
    <location>
        <begin position="78"/>
        <end position="103"/>
    </location>
</feature>
<feature type="mutagenesis site" description="High transactivation activity." evidence="6">
    <original>C</original>
    <variation>G</variation>
    <location>
        <position position="179"/>
    </location>
</feature>
<feature type="mutagenesis site" description="High transactivation activity." evidence="6">
    <original>E</original>
    <variation>D</variation>
    <variation>K</variation>
    <variation>R</variation>
    <location>
        <position position="185"/>
    </location>
</feature>
<feature type="mutagenesis site" description="High transactivation activity." evidence="6">
    <original>R</original>
    <variation>A</variation>
    <variation>K</variation>
    <location>
        <position position="186"/>
    </location>
</feature>
<feature type="mutagenesis site" description="Low transactivation activity." evidence="6">
    <original>L</original>
    <variation>G</variation>
    <location>
        <position position="187"/>
    </location>
</feature>
<feature type="mutagenesis site" description="High transactivation activity." evidence="6">
    <original>S</original>
    <variation>A</variation>
    <location>
        <position position="188"/>
    </location>
</feature>
<feature type="mutagenesis site" description="Low transactivation activity." evidence="6">
    <original>F</original>
    <variation>A</variation>
    <variation>G</variation>
    <variation>P</variation>
    <location>
        <position position="191"/>
    </location>
</feature>
<feature type="mutagenesis site" description="High transactivation activity." evidence="6">
    <original>S</original>
    <variation>A</variation>
    <location>
        <position position="192"/>
    </location>
</feature>
<feature type="mutagenesis site" description="Intermediate transactivation activity." evidence="6">
    <original>S</original>
    <variation>P</variation>
    <location>
        <position position="192"/>
    </location>
</feature>
<feature type="mutagenesis site" description="Intermediate transactivation activity." evidence="6">
    <original>R</original>
    <variation>E</variation>
    <location>
        <position position="195"/>
    </location>
</feature>
<feature type="mutagenesis site" description="Low transactivation activity." evidence="6">
    <original>R</original>
    <variation>G</variation>
    <location>
        <position position="195"/>
    </location>
</feature>
<feature type="sequence conflict" description="In Ref. 1; AAA40515." evidence="10" ref="1">
    <original>A</original>
    <variation>R</variation>
    <location>
        <position position="36"/>
    </location>
</feature>
<feature type="sequence conflict" description="In Ref. 1; AAA40515." evidence="10" ref="1">
    <original>G</original>
    <variation>P</variation>
    <location>
        <position position="91"/>
    </location>
</feature>
<organism>
    <name type="scientific">Mus musculus</name>
    <name type="common">Mouse</name>
    <dbReference type="NCBI Taxonomy" id="10090"/>
    <lineage>
        <taxon>Eukaryota</taxon>
        <taxon>Metazoa</taxon>
        <taxon>Chordata</taxon>
        <taxon>Craniata</taxon>
        <taxon>Vertebrata</taxon>
        <taxon>Euteleostomi</taxon>
        <taxon>Mammalia</taxon>
        <taxon>Eutheria</taxon>
        <taxon>Euarchontoglires</taxon>
        <taxon>Glires</taxon>
        <taxon>Rodentia</taxon>
        <taxon>Myomorpha</taxon>
        <taxon>Muroidea</taxon>
        <taxon>Muridae</taxon>
        <taxon>Murinae</taxon>
        <taxon>Mus</taxon>
        <taxon>Mus</taxon>
    </lineage>
</organism>
<sequence>MMQDVSSSPVSPADDSLSNSEEEPDRQQPASGKRGARKRRSSRRSAGGSAGPGGATGGGIGGGDEPGSPAQGKRGKKSAGGGGGGGAGGGGGGGGGSSSGGGSPQSYEELQTQRVMANVRERQRTQSLNEAFAALRKIIPTLPSDKLSKIQTLKLAARYIDFLYQVLQSDELDSKMASCSYVAHERLSYAFSVWRMEGAWSMSASH</sequence>
<reference key="1">
    <citation type="journal article" date="1991" name="Dev. Biol.">
        <title>The M-twist gene of Mus is expressed in subsets of mesodermal cells and is closely related to the Xenopus X-twi and the Drosophila twist genes.</title>
        <authorList>
            <person name="Wolf C."/>
            <person name="Thisse C."/>
            <person name="Stoetzel C."/>
            <person name="Thisse B."/>
            <person name="Gerlinger P."/>
            <person name="Perrin-Schmitt F."/>
        </authorList>
    </citation>
    <scope>NUCLEOTIDE SEQUENCE [GENOMIC DNA / MRNA]</scope>
    <scope>TISSUE SPECIFICITY</scope>
</reference>
<reference key="2">
    <citation type="journal article" date="2004" name="Genome Res.">
        <title>The status, quality, and expansion of the NIH full-length cDNA project: the Mammalian Gene Collection (MGC).</title>
        <authorList>
            <consortium name="The MGC Project Team"/>
        </authorList>
    </citation>
    <scope>NUCLEOTIDE SEQUENCE [LARGE SCALE MRNA]</scope>
    <source>
        <strain>FVB/N</strain>
        <tissue>Limb</tissue>
    </source>
</reference>
<reference key="3">
    <citation type="journal article" date="1997" name="Mol. Cell. Biol.">
        <title>The basic domain of myogenic basic helix-loop-helix (bHLH) proteins is the novel target for direct inhibition by another bHLH protein, Twist.</title>
        <authorList>
            <person name="Hamamori Y."/>
            <person name="Wu H.Y."/>
            <person name="Sartorelli V."/>
            <person name="Kedes L."/>
        </authorList>
    </citation>
    <scope>FUNCTION</scope>
</reference>
<reference key="4">
    <citation type="journal article" date="2003" name="Cell">
        <title>Twist regulates cytokine gene expression through a negative feedback loop that represses NF-kappaB activity.</title>
        <authorList>
            <person name="Sosic D."/>
            <person name="Richardson J.A."/>
            <person name="Yu K."/>
            <person name="Ornitz D.M."/>
            <person name="Olson E.N."/>
        </authorList>
    </citation>
    <scope>FUNCTION</scope>
    <scope>INDUCTION</scope>
</reference>
<reference key="5">
    <citation type="journal article" date="2004" name="J. Biol. Chem.">
        <title>Histone acetyltransferase-dependent chromatin remodeling and the vascular clock.</title>
        <authorList>
            <person name="Curtis A.M."/>
            <person name="Seo S.B."/>
            <person name="Westgate E.J."/>
            <person name="Rudic R.D."/>
            <person name="Smyth E.M."/>
            <person name="Chakravarti D."/>
            <person name="FitzGerald G.A."/>
            <person name="McNamara P."/>
        </authorList>
    </citation>
    <scope>FUNCTION</scope>
</reference>
<reference key="6">
    <citation type="journal article" date="2006" name="Dev. Dyn.">
        <title>Twist1 dimer selection regulates cranial suture patterning and fusion.</title>
        <authorList>
            <person name="Connerney J."/>
            <person name="Andreeva V."/>
            <person name="Leshem Y."/>
            <person name="Muentener C."/>
            <person name="Mercado M.A."/>
            <person name="Spicer D.B."/>
        </authorList>
    </citation>
    <scope>FUNCTION</scope>
    <scope>SUBUNIT</scope>
</reference>
<reference key="7">
    <citation type="journal article" date="2007" name="J. Biol. Chem.">
        <title>Mechanism of transcriptional activation by the proto-oncogene Twist1.</title>
        <authorList>
            <person name="Laursen K.B."/>
            <person name="Mielke E."/>
            <person name="Iannaccone P."/>
            <person name="Fuchtbauer E.M."/>
        </authorList>
    </citation>
    <scope>FUNCTION</scope>
    <scope>SUBUNIT</scope>
    <scope>MUTAGENESIS OF CYS-179; GLU-185; ARG-186; LEU-187; SER-188; PHE-191; SER-192 AND ARG-195</scope>
</reference>
<reference key="8">
    <citation type="journal article" date="2013" name="Cell Rep.">
        <title>Tcf15 primes pluripotent cells for differentiation.</title>
        <authorList>
            <person name="Davies O.R."/>
            <person name="Lin C.Y."/>
            <person name="Radzisheuskaya A."/>
            <person name="Zhou X."/>
            <person name="Taube J."/>
            <person name="Blin G."/>
            <person name="Waterhouse A."/>
            <person name="Smith A.J."/>
            <person name="Lowell S."/>
        </authorList>
    </citation>
    <scope>INTERACTION WITH TCF3</scope>
</reference>